<name>G6PI_BLOPB</name>
<accession>Q491V0</accession>
<protein>
    <recommendedName>
        <fullName evidence="1">Glucose-6-phosphate isomerase</fullName>
        <shortName evidence="1">GPI</shortName>
        <ecNumber evidence="1">5.3.1.9</ecNumber>
    </recommendedName>
    <alternativeName>
        <fullName evidence="1">Phosphoglucose isomerase</fullName>
        <shortName evidence="1">PGI</shortName>
    </alternativeName>
    <alternativeName>
        <fullName evidence="1">Phosphohexose isomerase</fullName>
        <shortName evidence="1">PHI</shortName>
    </alternativeName>
</protein>
<feature type="chain" id="PRO_0000180602" description="Glucose-6-phosphate isomerase">
    <location>
        <begin position="1"/>
        <end position="551"/>
    </location>
</feature>
<feature type="active site" description="Proton donor" evidence="1">
    <location>
        <position position="356"/>
    </location>
</feature>
<feature type="active site" evidence="1">
    <location>
        <position position="387"/>
    </location>
</feature>
<feature type="active site" evidence="1">
    <location>
        <position position="515"/>
    </location>
</feature>
<reference key="1">
    <citation type="journal article" date="2005" name="Genome Res.">
        <title>Genome sequence of Blochmannia pennsylvanicus indicates parallel evolutionary trends among bacterial mutualists of insects.</title>
        <authorList>
            <person name="Degnan P.H."/>
            <person name="Lazarus A.B."/>
            <person name="Wernegreen J.J."/>
        </authorList>
    </citation>
    <scope>NUCLEOTIDE SEQUENCE [LARGE SCALE GENOMIC DNA]</scope>
    <source>
        <strain>BPEN</strain>
    </source>
</reference>
<sequence length="551" mass="62900">MKNINPNRTQAWKHLKQHFDDMKSTSINDLFNQDKYRFAHFSKTFNNEILVDYSKNLITNETIIKLISLAIECDLIEAISDMFHGEKINCSEDRAVLHIALRNIKNTPILVDGFNVMPQINAVLNKMKQFCNRVIQGNWTGYTDKIITDIVNIGIGGSNLGPYMVTEALKPYRNHLNMHFVSNIDGTHIFETLKNLNPENTLFVIASKTFTTQETMTNALSARNWFCKATSDAQHISKHFIALSTNTIAVRKFGIDPSENMFKFWDWVGGRYSLWSAIGLPIMLSVGVSNFELLLTGAHDMDIHFYSTPLHENLPVILALIGIWYNNFFQVETEAIFPYDQYMHRFTAYLQQVNMESNGKCVDRNGCPITYQTGPIIWGEPGTNGQHSFYQLLHQGTKMVPCDFIAPAISHNPISDHHEKLISNFFAQTKALAFGNTHLTSMQKYIQSKKNYKHEQCIVPFKLCKGNNPSNSILVKKITPYTLGALIALYEHKIFTQGIIFNIYTFDQWGVELGKQLADSILPELKYESMISKNHDSSTYGLIHCYKSWCG</sequence>
<proteinExistence type="inferred from homology"/>
<evidence type="ECO:0000255" key="1">
    <source>
        <dbReference type="HAMAP-Rule" id="MF_00473"/>
    </source>
</evidence>
<comment type="function">
    <text evidence="1">Catalyzes the reversible isomerization of glucose-6-phosphate to fructose-6-phosphate.</text>
</comment>
<comment type="catalytic activity">
    <reaction evidence="1">
        <text>alpha-D-glucose 6-phosphate = beta-D-fructose 6-phosphate</text>
        <dbReference type="Rhea" id="RHEA:11816"/>
        <dbReference type="ChEBI" id="CHEBI:57634"/>
        <dbReference type="ChEBI" id="CHEBI:58225"/>
        <dbReference type="EC" id="5.3.1.9"/>
    </reaction>
</comment>
<comment type="pathway">
    <text evidence="1">Carbohydrate biosynthesis; gluconeogenesis.</text>
</comment>
<comment type="pathway">
    <text evidence="1">Carbohydrate degradation; glycolysis; D-glyceraldehyde 3-phosphate and glycerone phosphate from D-glucose: step 2/4.</text>
</comment>
<comment type="subcellular location">
    <subcellularLocation>
        <location evidence="1">Cytoplasm</location>
    </subcellularLocation>
</comment>
<comment type="similarity">
    <text evidence="1">Belongs to the GPI family.</text>
</comment>
<organism>
    <name type="scientific">Blochmanniella pennsylvanica (strain BPEN)</name>
    <dbReference type="NCBI Taxonomy" id="291272"/>
    <lineage>
        <taxon>Bacteria</taxon>
        <taxon>Pseudomonadati</taxon>
        <taxon>Pseudomonadota</taxon>
        <taxon>Gammaproteobacteria</taxon>
        <taxon>Enterobacterales</taxon>
        <taxon>Enterobacteriaceae</taxon>
        <taxon>ant endosymbionts</taxon>
        <taxon>Candidatus Blochmanniella</taxon>
    </lineage>
</organism>
<keyword id="KW-0963">Cytoplasm</keyword>
<keyword id="KW-0312">Gluconeogenesis</keyword>
<keyword id="KW-0324">Glycolysis</keyword>
<keyword id="KW-0413">Isomerase</keyword>
<keyword id="KW-1185">Reference proteome</keyword>
<dbReference type="EC" id="5.3.1.9" evidence="1"/>
<dbReference type="EMBL" id="CP000016">
    <property type="protein sequence ID" value="AAZ41254.1"/>
    <property type="molecule type" value="Genomic_DNA"/>
</dbReference>
<dbReference type="RefSeq" id="WP_011283165.1">
    <property type="nucleotide sequence ID" value="NC_007292.1"/>
</dbReference>
<dbReference type="SMR" id="Q491V0"/>
<dbReference type="STRING" id="291272.BPEN_656"/>
<dbReference type="KEGG" id="bpn:BPEN_656"/>
<dbReference type="eggNOG" id="COG0166">
    <property type="taxonomic scope" value="Bacteria"/>
</dbReference>
<dbReference type="HOGENOM" id="CLU_017947_3_1_6"/>
<dbReference type="OrthoDB" id="140919at2"/>
<dbReference type="UniPathway" id="UPA00109">
    <property type="reaction ID" value="UER00181"/>
</dbReference>
<dbReference type="UniPathway" id="UPA00138"/>
<dbReference type="Proteomes" id="UP000007794">
    <property type="component" value="Chromosome"/>
</dbReference>
<dbReference type="GO" id="GO:0005829">
    <property type="term" value="C:cytosol"/>
    <property type="evidence" value="ECO:0007669"/>
    <property type="project" value="TreeGrafter"/>
</dbReference>
<dbReference type="GO" id="GO:0097367">
    <property type="term" value="F:carbohydrate derivative binding"/>
    <property type="evidence" value="ECO:0007669"/>
    <property type="project" value="InterPro"/>
</dbReference>
<dbReference type="GO" id="GO:0004347">
    <property type="term" value="F:glucose-6-phosphate isomerase activity"/>
    <property type="evidence" value="ECO:0007669"/>
    <property type="project" value="UniProtKB-UniRule"/>
</dbReference>
<dbReference type="GO" id="GO:0048029">
    <property type="term" value="F:monosaccharide binding"/>
    <property type="evidence" value="ECO:0007669"/>
    <property type="project" value="TreeGrafter"/>
</dbReference>
<dbReference type="GO" id="GO:0006094">
    <property type="term" value="P:gluconeogenesis"/>
    <property type="evidence" value="ECO:0007669"/>
    <property type="project" value="UniProtKB-UniRule"/>
</dbReference>
<dbReference type="GO" id="GO:0051156">
    <property type="term" value="P:glucose 6-phosphate metabolic process"/>
    <property type="evidence" value="ECO:0007669"/>
    <property type="project" value="TreeGrafter"/>
</dbReference>
<dbReference type="GO" id="GO:0006096">
    <property type="term" value="P:glycolytic process"/>
    <property type="evidence" value="ECO:0007669"/>
    <property type="project" value="UniProtKB-UniRule"/>
</dbReference>
<dbReference type="CDD" id="cd05015">
    <property type="entry name" value="SIS_PGI_1"/>
    <property type="match status" value="1"/>
</dbReference>
<dbReference type="CDD" id="cd05016">
    <property type="entry name" value="SIS_PGI_2"/>
    <property type="match status" value="1"/>
</dbReference>
<dbReference type="FunFam" id="1.10.1390.10:FF:000001">
    <property type="entry name" value="Glucose-6-phosphate isomerase"/>
    <property type="match status" value="1"/>
</dbReference>
<dbReference type="FunFam" id="3.40.50.10490:FF:000004">
    <property type="entry name" value="Glucose-6-phosphate isomerase"/>
    <property type="match status" value="1"/>
</dbReference>
<dbReference type="Gene3D" id="1.10.1390.10">
    <property type="match status" value="1"/>
</dbReference>
<dbReference type="Gene3D" id="3.40.50.10490">
    <property type="entry name" value="Glucose-6-phosphate isomerase like protein, domain 1"/>
    <property type="match status" value="2"/>
</dbReference>
<dbReference type="HAMAP" id="MF_00473">
    <property type="entry name" value="G6P_isomerase"/>
    <property type="match status" value="1"/>
</dbReference>
<dbReference type="InterPro" id="IPR001672">
    <property type="entry name" value="G6P_Isomerase"/>
</dbReference>
<dbReference type="InterPro" id="IPR023096">
    <property type="entry name" value="G6P_Isomerase_C"/>
</dbReference>
<dbReference type="InterPro" id="IPR018189">
    <property type="entry name" value="Phosphoglucose_isomerase_CS"/>
</dbReference>
<dbReference type="InterPro" id="IPR046348">
    <property type="entry name" value="SIS_dom_sf"/>
</dbReference>
<dbReference type="InterPro" id="IPR035476">
    <property type="entry name" value="SIS_PGI_1"/>
</dbReference>
<dbReference type="InterPro" id="IPR035482">
    <property type="entry name" value="SIS_PGI_2"/>
</dbReference>
<dbReference type="NCBIfam" id="NF001211">
    <property type="entry name" value="PRK00179.1"/>
    <property type="match status" value="1"/>
</dbReference>
<dbReference type="PANTHER" id="PTHR11469">
    <property type="entry name" value="GLUCOSE-6-PHOSPHATE ISOMERASE"/>
    <property type="match status" value="1"/>
</dbReference>
<dbReference type="PANTHER" id="PTHR11469:SF1">
    <property type="entry name" value="GLUCOSE-6-PHOSPHATE ISOMERASE"/>
    <property type="match status" value="1"/>
</dbReference>
<dbReference type="Pfam" id="PF00342">
    <property type="entry name" value="PGI"/>
    <property type="match status" value="1"/>
</dbReference>
<dbReference type="PRINTS" id="PR00662">
    <property type="entry name" value="G6PISOMERASE"/>
</dbReference>
<dbReference type="SUPFAM" id="SSF53697">
    <property type="entry name" value="SIS domain"/>
    <property type="match status" value="1"/>
</dbReference>
<dbReference type="PROSITE" id="PS00765">
    <property type="entry name" value="P_GLUCOSE_ISOMERASE_1"/>
    <property type="match status" value="1"/>
</dbReference>
<dbReference type="PROSITE" id="PS00174">
    <property type="entry name" value="P_GLUCOSE_ISOMERASE_2"/>
    <property type="match status" value="1"/>
</dbReference>
<dbReference type="PROSITE" id="PS51463">
    <property type="entry name" value="P_GLUCOSE_ISOMERASE_3"/>
    <property type="match status" value="1"/>
</dbReference>
<gene>
    <name evidence="1" type="primary">pgi</name>
    <name type="ordered locus">BPEN_656</name>
</gene>